<comment type="function">
    <text evidence="3">Has an organic peroxide-dependent peroxidase activity. Exhibits strong peroxidase activity using organic hydroperoxides as cosubstrates, weak peroxidase activity using hydrogen peroxide and negligible catalase activity. May have a role in elimination of reactive oxygen species, in particular by deactivating hydroperoxides.</text>
</comment>
<comment type="cofactor">
    <cofactor evidence="3 4">
        <name>heme</name>
        <dbReference type="ChEBI" id="CHEBI:30413"/>
    </cofactor>
</comment>
<comment type="biophysicochemical properties">
    <kinetics>
        <KM evidence="3">30 mM for H(2)O(2) in 2,2'-azino-bis(3-ethylbenzthiazoline-6-sulphonic acid) (ABTS) oxidation assay (at pH 7.0)</KM>
        <KM evidence="3">22 mM for t-butyl hydroperoxide in ABTS oxidation assay (at pH 7.0)</KM>
        <KM evidence="3">3 mM for cumene hydroperoxide in ABTS oxidation assay (at pH 7.0)</KM>
        <KM evidence="3">49 uM for 9S-hydroperoxy-octadecadienoic acid (9S-HPODE) used as a cosubstrate with ABTS (at pH 7.0)</KM>
        <text evidence="3">kcat is 13 sec(-1) for H(2)O(2). kcat is 320 sec(-1) for t-butyl hydroperoxide. kcat is 330 sec(-1) for cumene hydroperoxide. kcat is 529 sec(-1) for 9S-HPODE.</text>
    </kinetics>
</comment>
<comment type="subunit">
    <text evidence="3">Monomer.</text>
</comment>
<comment type="similarity">
    <text evidence="2">Belongs to the catalase family.</text>
</comment>
<accession>Q73WB6</accession>
<sequence>MSGGLTPDQAIDAIRGTGGAQPGCRALHAKGTLYRGTFTATRDAVMLSAAPHLDGSTVPALIRFSNGSGNPKQRDGAPGVRGMAVKFTLPDGSTTDVSAQTARLLVSSTPEGFIDLLKAMRPGLTTPLRLATHLLTHPRLLGALPLLREANRIPASYATTEYHGLHAFRWIAADGSARFVRYHLVPTAAEEYLSASDARGKDPDFLTDELAARLQDGPVRFDFRVQIAGPTDSTVDPSSAWQSTQIVTVGTVTITGPDTEREHGGDIVVFDPMRVTDGIEPSDDPVLRFRTLVYSASVKLRTGVDRGAQAPPV</sequence>
<gene>
    <name type="ordered locus">MAP_2744c</name>
</gene>
<reference evidence="7" key="1">
    <citation type="journal article" date="2005" name="Proc. Natl. Acad. Sci. U.S.A.">
        <title>The complete genome sequence of Mycobacterium avium subspecies paratuberculosis.</title>
        <authorList>
            <person name="Li L."/>
            <person name="Bannantine J.P."/>
            <person name="Zhang Q."/>
            <person name="Amonsin A."/>
            <person name="May B.J."/>
            <person name="Alt D."/>
            <person name="Banerji N."/>
            <person name="Kanjilal S."/>
            <person name="Kapur V."/>
        </authorList>
    </citation>
    <scope>NUCLEOTIDE SEQUENCE [LARGE SCALE GENOMIC DNA]</scope>
    <source>
        <strain>ATCC BAA-968 / K-10</strain>
    </source>
</reference>
<reference evidence="6" key="2">
    <citation type="journal article" date="2011" name="J. Inorg. Biochem.">
        <title>Coordination modes of tyrosinate-ligated catalase-type heme enzymes: magnetic circular dichroism studies of Plexaura homomalla allene oxide synthase, Mycobacterium avium ssp. paratuberculosis protein-2744c, and bovine liver catalase in their ferric and ferrous states.</title>
        <authorList>
            <person name="Bandara D.M."/>
            <person name="Sono M."/>
            <person name="Bruce G.S."/>
            <person name="Brash A.R."/>
            <person name="Dawson J.H."/>
        </authorList>
    </citation>
    <scope>MAGNETIC CIRCULAR DICHROISM</scope>
    <scope>COFACTOR</scope>
</reference>
<reference evidence="6 8" key="3">
    <citation type="journal article" date="2009" name="Protein Sci.">
        <title>The structure and peroxidase activity of a 33-kDa catalase-related protein from Mycobacterium avium ssp. paratuberculosis.</title>
        <authorList>
            <person name="Pakhomova S."/>
            <person name="Gao B."/>
            <person name="Boeglin W.E."/>
            <person name="Brash A.R."/>
            <person name="Newcomer M.E."/>
        </authorList>
    </citation>
    <scope>X-RAY CRYSTALLOGRAPHY (1.80 ANGSTROMS) IN COMPLEX WITH HEME</scope>
    <scope>FUNCTION</scope>
    <scope>CATALYTIC ACTIVITY</scope>
    <scope>COFACTOR</scope>
    <scope>BIOPHYSICOCHEMICAL PROPERTIES</scope>
    <scope>SUBUNIT</scope>
</reference>
<dbReference type="EC" id="1.11.1.-" evidence="3"/>
<dbReference type="EMBL" id="AE016958">
    <property type="protein sequence ID" value="AAS05061.1"/>
    <property type="molecule type" value="Genomic_DNA"/>
</dbReference>
<dbReference type="RefSeq" id="WP_003875322.1">
    <property type="nucleotide sequence ID" value="NZ_CP106873.1"/>
</dbReference>
<dbReference type="PDB" id="3E4W">
    <property type="method" value="X-ray"/>
    <property type="resolution" value="1.80 A"/>
    <property type="chains" value="A/B=1-313"/>
</dbReference>
<dbReference type="PDB" id="3E4Y">
    <property type="method" value="X-ray"/>
    <property type="resolution" value="2.60 A"/>
    <property type="chains" value="A=1-313"/>
</dbReference>
<dbReference type="PDBsum" id="3E4W"/>
<dbReference type="PDBsum" id="3E4Y"/>
<dbReference type="SMR" id="Q73WB6"/>
<dbReference type="STRING" id="262316.MAP_2744c"/>
<dbReference type="KEGG" id="mpa:MAP_2744c"/>
<dbReference type="eggNOG" id="COG0753">
    <property type="taxonomic scope" value="Bacteria"/>
</dbReference>
<dbReference type="HOGENOM" id="CLU_045961_0_0_11"/>
<dbReference type="EvolutionaryTrace" id="Q73WB6"/>
<dbReference type="Proteomes" id="UP000000580">
    <property type="component" value="Chromosome"/>
</dbReference>
<dbReference type="GO" id="GO:0005737">
    <property type="term" value="C:cytoplasm"/>
    <property type="evidence" value="ECO:0007669"/>
    <property type="project" value="TreeGrafter"/>
</dbReference>
<dbReference type="GO" id="GO:0004096">
    <property type="term" value="F:catalase activity"/>
    <property type="evidence" value="ECO:0007669"/>
    <property type="project" value="InterPro"/>
</dbReference>
<dbReference type="GO" id="GO:0020037">
    <property type="term" value="F:heme binding"/>
    <property type="evidence" value="ECO:0000314"/>
    <property type="project" value="UniProtKB"/>
</dbReference>
<dbReference type="GO" id="GO:0005506">
    <property type="term" value="F:iron ion binding"/>
    <property type="evidence" value="ECO:0000314"/>
    <property type="project" value="UniProtKB"/>
</dbReference>
<dbReference type="GO" id="GO:0004601">
    <property type="term" value="F:peroxidase activity"/>
    <property type="evidence" value="ECO:0000314"/>
    <property type="project" value="UniProtKB"/>
</dbReference>
<dbReference type="GO" id="GO:0042744">
    <property type="term" value="P:hydrogen peroxide catabolic process"/>
    <property type="evidence" value="ECO:0007669"/>
    <property type="project" value="TreeGrafter"/>
</dbReference>
<dbReference type="GO" id="GO:0042743">
    <property type="term" value="P:hydrogen peroxide metabolic process"/>
    <property type="evidence" value="ECO:0000314"/>
    <property type="project" value="UniProtKB"/>
</dbReference>
<dbReference type="GO" id="GO:2000377">
    <property type="term" value="P:regulation of reactive oxygen species metabolic process"/>
    <property type="evidence" value="ECO:0000314"/>
    <property type="project" value="UniProtKB"/>
</dbReference>
<dbReference type="GO" id="GO:0042542">
    <property type="term" value="P:response to hydrogen peroxide"/>
    <property type="evidence" value="ECO:0007669"/>
    <property type="project" value="TreeGrafter"/>
</dbReference>
<dbReference type="CDD" id="cd08153">
    <property type="entry name" value="srpA_like"/>
    <property type="match status" value="1"/>
</dbReference>
<dbReference type="Gene3D" id="1.20.1280.120">
    <property type="match status" value="1"/>
</dbReference>
<dbReference type="Gene3D" id="2.40.180.10">
    <property type="entry name" value="Catalase core domain"/>
    <property type="match status" value="1"/>
</dbReference>
<dbReference type="InterPro" id="IPR018028">
    <property type="entry name" value="Catalase"/>
</dbReference>
<dbReference type="InterPro" id="IPR011614">
    <property type="entry name" value="Catalase_core"/>
</dbReference>
<dbReference type="InterPro" id="IPR020835">
    <property type="entry name" value="Catalase_sf"/>
</dbReference>
<dbReference type="InterPro" id="IPR024168">
    <property type="entry name" value="Catalase_SrpA-type_pred"/>
</dbReference>
<dbReference type="PANTHER" id="PTHR11465">
    <property type="entry name" value="CATALASE"/>
    <property type="match status" value="1"/>
</dbReference>
<dbReference type="PANTHER" id="PTHR11465:SF9">
    <property type="entry name" value="CATALASE"/>
    <property type="match status" value="1"/>
</dbReference>
<dbReference type="Pfam" id="PF00199">
    <property type="entry name" value="Catalase"/>
    <property type="match status" value="1"/>
</dbReference>
<dbReference type="PIRSF" id="PIRSF000296">
    <property type="entry name" value="SrpA"/>
    <property type="match status" value="1"/>
</dbReference>
<dbReference type="PRINTS" id="PR00067">
    <property type="entry name" value="CATALASE"/>
</dbReference>
<dbReference type="SMART" id="SM01060">
    <property type="entry name" value="Catalase"/>
    <property type="match status" value="1"/>
</dbReference>
<dbReference type="SUPFAM" id="SSF56634">
    <property type="entry name" value="Heme-dependent catalase-like"/>
    <property type="match status" value="1"/>
</dbReference>
<dbReference type="PROSITE" id="PS51402">
    <property type="entry name" value="CATALASE_3"/>
    <property type="match status" value="1"/>
</dbReference>
<name>CRPE_MYCPA</name>
<evidence type="ECO:0000250" key="1">
    <source>
        <dbReference type="UniProtKB" id="P04040"/>
    </source>
</evidence>
<evidence type="ECO:0000255" key="2"/>
<evidence type="ECO:0000269" key="3">
    <source>
    </source>
</evidence>
<evidence type="ECO:0000269" key="4">
    <source>
    </source>
</evidence>
<evidence type="ECO:0000303" key="5">
    <source>
    </source>
</evidence>
<evidence type="ECO:0000305" key="6"/>
<evidence type="ECO:0000312" key="7">
    <source>
        <dbReference type="EMBL" id="AAS05061.1"/>
    </source>
</evidence>
<evidence type="ECO:0000312" key="8">
    <source>
        <dbReference type="PDB" id="3E4W"/>
    </source>
</evidence>
<evidence type="ECO:0007829" key="9">
    <source>
        <dbReference type="PDB" id="3E4W"/>
    </source>
</evidence>
<organism>
    <name type="scientific">Mycolicibacterium paratuberculosis (strain ATCC BAA-968 / K-10)</name>
    <name type="common">Mycobacterium paratuberculosis</name>
    <dbReference type="NCBI Taxonomy" id="262316"/>
    <lineage>
        <taxon>Bacteria</taxon>
        <taxon>Bacillati</taxon>
        <taxon>Actinomycetota</taxon>
        <taxon>Actinomycetes</taxon>
        <taxon>Mycobacteriales</taxon>
        <taxon>Mycobacteriaceae</taxon>
        <taxon>Mycobacterium</taxon>
        <taxon>Mycobacterium avium complex (MAC)</taxon>
    </lineage>
</organism>
<keyword id="KW-0002">3D-structure</keyword>
<keyword id="KW-0349">Heme</keyword>
<keyword id="KW-0408">Iron</keyword>
<keyword id="KW-0479">Metal-binding</keyword>
<keyword id="KW-0560">Oxidoreductase</keyword>
<keyword id="KW-0575">Peroxidase</keyword>
<keyword id="KW-1185">Reference proteome</keyword>
<proteinExistence type="evidence at protein level"/>
<feature type="chain" id="PRO_0000424152" description="Catalase-related peroxidase">
    <location>
        <begin position="1"/>
        <end position="313"/>
    </location>
</feature>
<feature type="active site" evidence="1">
    <location>
        <position position="28"/>
    </location>
</feature>
<feature type="binding site" description="axial binding residue">
    <location>
        <position position="294"/>
    </location>
    <ligand>
        <name>heme</name>
        <dbReference type="ChEBI" id="CHEBI:30413"/>
    </ligand>
    <ligandPart>
        <name>Fe</name>
        <dbReference type="ChEBI" id="CHEBI:18248"/>
    </ligandPart>
</feature>
<feature type="helix" evidence="9">
    <location>
        <begin position="7"/>
        <end position="16"/>
    </location>
</feature>
<feature type="strand" evidence="9">
    <location>
        <begin position="26"/>
        <end position="28"/>
    </location>
</feature>
<feature type="strand" evidence="9">
    <location>
        <begin position="30"/>
        <end position="40"/>
    </location>
</feature>
<feature type="helix" evidence="9">
    <location>
        <begin position="44"/>
        <end position="46"/>
    </location>
</feature>
<feature type="helix" evidence="9">
    <location>
        <begin position="51"/>
        <end position="53"/>
    </location>
</feature>
<feature type="strand" evidence="9">
    <location>
        <begin position="57"/>
        <end position="69"/>
    </location>
</feature>
<feature type="strand" evidence="9">
    <location>
        <begin position="81"/>
        <end position="88"/>
    </location>
</feature>
<feature type="strand" evidence="9">
    <location>
        <begin position="94"/>
        <end position="101"/>
    </location>
</feature>
<feature type="helix" evidence="9">
    <location>
        <begin position="110"/>
        <end position="119"/>
    </location>
</feature>
<feature type="strand" evidence="9">
    <location>
        <begin position="121"/>
        <end position="123"/>
    </location>
</feature>
<feature type="helix" evidence="9">
    <location>
        <begin position="126"/>
        <end position="136"/>
    </location>
</feature>
<feature type="helix" evidence="9">
    <location>
        <begin position="138"/>
        <end position="141"/>
    </location>
</feature>
<feature type="helix" evidence="9">
    <location>
        <begin position="144"/>
        <end position="150"/>
    </location>
</feature>
<feature type="strand" evidence="9">
    <location>
        <begin position="153"/>
        <end position="155"/>
    </location>
</feature>
<feature type="helix" evidence="9">
    <location>
        <begin position="157"/>
        <end position="159"/>
    </location>
</feature>
<feature type="strand" evidence="9">
    <location>
        <begin position="162"/>
        <end position="171"/>
    </location>
</feature>
<feature type="strand" evidence="9">
    <location>
        <begin position="177"/>
        <end position="188"/>
    </location>
</feature>
<feature type="helix" evidence="9">
    <location>
        <begin position="195"/>
        <end position="199"/>
    </location>
</feature>
<feature type="helix" evidence="9">
    <location>
        <begin position="205"/>
        <end position="216"/>
    </location>
</feature>
<feature type="strand" evidence="9">
    <location>
        <begin position="219"/>
        <end position="227"/>
    </location>
</feature>
<feature type="strand" evidence="9">
    <location>
        <begin position="246"/>
        <end position="257"/>
    </location>
</feature>
<feature type="strand" evidence="9">
    <location>
        <begin position="260"/>
        <end position="263"/>
    </location>
</feature>
<feature type="strand" evidence="9">
    <location>
        <begin position="279"/>
        <end position="281"/>
    </location>
</feature>
<feature type="helix" evidence="9">
    <location>
        <begin position="285"/>
        <end position="302"/>
    </location>
</feature>
<protein>
    <recommendedName>
        <fullName evidence="5">Catalase-related peroxidase</fullName>
        <ecNumber evidence="3">1.11.1.-</ecNumber>
    </recommendedName>
</protein>